<evidence type="ECO:0000255" key="1">
    <source>
        <dbReference type="HAMAP-Rule" id="MF_00362"/>
    </source>
</evidence>
<evidence type="ECO:0000305" key="2"/>
<organism>
    <name type="scientific">Aromatoleum aromaticum (strain DSM 19018 / LMG 30748 / EbN1)</name>
    <name type="common">Azoarcus sp. (strain EbN1)</name>
    <dbReference type="NCBI Taxonomy" id="76114"/>
    <lineage>
        <taxon>Bacteria</taxon>
        <taxon>Pseudomonadati</taxon>
        <taxon>Pseudomonadota</taxon>
        <taxon>Betaproteobacteria</taxon>
        <taxon>Rhodocyclales</taxon>
        <taxon>Rhodocyclaceae</taxon>
        <taxon>Aromatoleum</taxon>
    </lineage>
</organism>
<name>RL10_AROAE</name>
<reference key="1">
    <citation type="journal article" date="2005" name="Arch. Microbiol.">
        <title>The genome sequence of an anaerobic aromatic-degrading denitrifying bacterium, strain EbN1.</title>
        <authorList>
            <person name="Rabus R."/>
            <person name="Kube M."/>
            <person name="Heider J."/>
            <person name="Beck A."/>
            <person name="Heitmann K."/>
            <person name="Widdel F."/>
            <person name="Reinhardt R."/>
        </authorList>
    </citation>
    <scope>NUCLEOTIDE SEQUENCE [LARGE SCALE GENOMIC DNA]</scope>
    <source>
        <strain>DSM 19018 / LMG 30748 / EbN1</strain>
    </source>
</reference>
<accession>Q5P341</accession>
<keyword id="KW-1185">Reference proteome</keyword>
<keyword id="KW-0687">Ribonucleoprotein</keyword>
<keyword id="KW-0689">Ribosomal protein</keyword>
<keyword id="KW-0694">RNA-binding</keyword>
<keyword id="KW-0699">rRNA-binding</keyword>
<proteinExistence type="inferred from homology"/>
<dbReference type="EMBL" id="CR555306">
    <property type="protein sequence ID" value="CAI08273.1"/>
    <property type="molecule type" value="Genomic_DNA"/>
</dbReference>
<dbReference type="RefSeq" id="WP_011237964.1">
    <property type="nucleotide sequence ID" value="NC_006513.1"/>
</dbReference>
<dbReference type="SMR" id="Q5P341"/>
<dbReference type="STRING" id="76114.ebA3816"/>
<dbReference type="KEGG" id="eba:ebA3816"/>
<dbReference type="eggNOG" id="COG0244">
    <property type="taxonomic scope" value="Bacteria"/>
</dbReference>
<dbReference type="HOGENOM" id="CLU_092227_0_1_4"/>
<dbReference type="OrthoDB" id="9808307at2"/>
<dbReference type="Proteomes" id="UP000006552">
    <property type="component" value="Chromosome"/>
</dbReference>
<dbReference type="GO" id="GO:1990904">
    <property type="term" value="C:ribonucleoprotein complex"/>
    <property type="evidence" value="ECO:0007669"/>
    <property type="project" value="UniProtKB-KW"/>
</dbReference>
<dbReference type="GO" id="GO:0005840">
    <property type="term" value="C:ribosome"/>
    <property type="evidence" value="ECO:0007669"/>
    <property type="project" value="UniProtKB-KW"/>
</dbReference>
<dbReference type="GO" id="GO:0070180">
    <property type="term" value="F:large ribosomal subunit rRNA binding"/>
    <property type="evidence" value="ECO:0007669"/>
    <property type="project" value="UniProtKB-UniRule"/>
</dbReference>
<dbReference type="GO" id="GO:0006412">
    <property type="term" value="P:translation"/>
    <property type="evidence" value="ECO:0007669"/>
    <property type="project" value="UniProtKB-UniRule"/>
</dbReference>
<dbReference type="CDD" id="cd05797">
    <property type="entry name" value="Ribosomal_L10"/>
    <property type="match status" value="1"/>
</dbReference>
<dbReference type="Gene3D" id="3.30.70.1730">
    <property type="match status" value="1"/>
</dbReference>
<dbReference type="Gene3D" id="6.10.250.290">
    <property type="match status" value="1"/>
</dbReference>
<dbReference type="HAMAP" id="MF_00362">
    <property type="entry name" value="Ribosomal_uL10"/>
    <property type="match status" value="1"/>
</dbReference>
<dbReference type="InterPro" id="IPR001790">
    <property type="entry name" value="Ribosomal_uL10"/>
</dbReference>
<dbReference type="InterPro" id="IPR043141">
    <property type="entry name" value="Ribosomal_uL10-like_sf"/>
</dbReference>
<dbReference type="InterPro" id="IPR022973">
    <property type="entry name" value="Ribosomal_uL10_bac"/>
</dbReference>
<dbReference type="InterPro" id="IPR047865">
    <property type="entry name" value="Ribosomal_uL10_bac_type"/>
</dbReference>
<dbReference type="NCBIfam" id="NF000955">
    <property type="entry name" value="PRK00099.1-1"/>
    <property type="match status" value="1"/>
</dbReference>
<dbReference type="PANTHER" id="PTHR11560">
    <property type="entry name" value="39S RIBOSOMAL PROTEIN L10, MITOCHONDRIAL"/>
    <property type="match status" value="1"/>
</dbReference>
<dbReference type="Pfam" id="PF00466">
    <property type="entry name" value="Ribosomal_L10"/>
    <property type="match status" value="1"/>
</dbReference>
<dbReference type="SUPFAM" id="SSF160369">
    <property type="entry name" value="Ribosomal protein L10-like"/>
    <property type="match status" value="1"/>
</dbReference>
<comment type="function">
    <text evidence="1">Forms part of the ribosomal stalk, playing a central role in the interaction of the ribosome with GTP-bound translation factors.</text>
</comment>
<comment type="subunit">
    <text evidence="1">Part of the ribosomal stalk of the 50S ribosomal subunit. The N-terminus interacts with L11 and the large rRNA to form the base of the stalk. The C-terminus forms an elongated spine to which L12 dimers bind in a sequential fashion forming a multimeric L10(L12)X complex.</text>
</comment>
<comment type="similarity">
    <text evidence="1">Belongs to the universal ribosomal protein uL10 family.</text>
</comment>
<sequence length="166" mass="17305">MGLNLDDKKAVVAEVSAQVANAQTIAVAEYRGIAVGDLTGLRAKARESGVYLRVLKNTLVRRAIAETPFAGLSDQLVGPLIYGISEDPVAAAKVLNDFAKGNDKLVLKAGSYAGNTLDKAGVQALASIPSREELLARLLGVMQAPVTGFACTLAALAKKREEEVAA</sequence>
<feature type="chain" id="PRO_0000234833" description="Large ribosomal subunit protein uL10">
    <location>
        <begin position="1"/>
        <end position="166"/>
    </location>
</feature>
<protein>
    <recommendedName>
        <fullName evidence="1">Large ribosomal subunit protein uL10</fullName>
    </recommendedName>
    <alternativeName>
        <fullName evidence="2">50S ribosomal protein L10</fullName>
    </alternativeName>
</protein>
<gene>
    <name evidence="1" type="primary">rplJ</name>
    <name type="ordered locus">AZOSEA21480</name>
    <name type="ORF">ebA3816</name>
</gene>